<sequence>MNGPVDGLCDHSLSEEGAFMFTSESVGEGHPDKICDQISDAVLDAHLKQDPNAKVACETVCKTGMVLLCGEITSMAMIDYQRVVRDTIKHIGYDDSAKGFDFKTCNVLVALEQQSPDIAQCVHLDRNEEDVGAGDQGLMFGYATDETEECMPLTIVLAHKLNTRMADLRRSGVLPWLRPDSKTQVTVQYVQDNGAVIPVRVHTIVISVQHNEDITLEAMREALKEQVIKAVVPAKYLDEDTIYHLQPSGRFVIGGPQGDAGVTGRKIIVDTYGGWGAHGGGAFSGKDYTKVDRSAAYAARWVAKSLVKAGLCRRVLVQVSYAIGVAEPLSISIFTYGTSKKTERDELLEVVNKNFDLRPGVIVRDLDLKKPIYQKTACYGHFGRSEFPWEVPKKLVF</sequence>
<dbReference type="EC" id="2.5.1.6" evidence="4 6 8"/>
<dbReference type="EMBL" id="X15734">
    <property type="protein sequence ID" value="CAA33754.1"/>
    <property type="molecule type" value="mRNA"/>
</dbReference>
<dbReference type="EMBL" id="X60822">
    <property type="status" value="NOT_ANNOTATED_CDS"/>
    <property type="molecule type" value="mRNA"/>
</dbReference>
<dbReference type="EMBL" id="BC089770">
    <property type="protein sequence ID" value="AAH89770.1"/>
    <property type="molecule type" value="mRNA"/>
</dbReference>
<dbReference type="PIR" id="S06114">
    <property type="entry name" value="S06114"/>
</dbReference>
<dbReference type="RefSeq" id="NP_036992.2">
    <property type="nucleotide sequence ID" value="NM_012860.2"/>
</dbReference>
<dbReference type="PDB" id="1O90">
    <property type="method" value="X-ray"/>
    <property type="resolution" value="3.10 A"/>
    <property type="chains" value="A/B=1-397"/>
</dbReference>
<dbReference type="PDB" id="1O92">
    <property type="method" value="X-ray"/>
    <property type="resolution" value="3.19 A"/>
    <property type="chains" value="A/B=1-397"/>
</dbReference>
<dbReference type="PDB" id="1O93">
    <property type="method" value="X-ray"/>
    <property type="resolution" value="3.49 A"/>
    <property type="chains" value="A/B=1-397"/>
</dbReference>
<dbReference type="PDB" id="1O9T">
    <property type="method" value="X-ray"/>
    <property type="resolution" value="2.90 A"/>
    <property type="chains" value="A/B=1-397"/>
</dbReference>
<dbReference type="PDB" id="1QM4">
    <property type="method" value="X-ray"/>
    <property type="resolution" value="2.66 A"/>
    <property type="chains" value="A/B=1-397"/>
</dbReference>
<dbReference type="PDBsum" id="1O90"/>
<dbReference type="PDBsum" id="1O92"/>
<dbReference type="PDBsum" id="1O93"/>
<dbReference type="PDBsum" id="1O9T"/>
<dbReference type="PDBsum" id="1QM4"/>
<dbReference type="SMR" id="P13444"/>
<dbReference type="BioGRID" id="247370">
    <property type="interactions" value="2"/>
</dbReference>
<dbReference type="ComplexPortal" id="CPX-58">
    <property type="entry name" value="Methionine adenosyltransferase complex variant 1"/>
</dbReference>
<dbReference type="ComplexPortal" id="CPX-59">
    <property type="entry name" value="Methionine adenosyltransferase complex variant 3"/>
</dbReference>
<dbReference type="FunCoup" id="P13444">
    <property type="interactions" value="880"/>
</dbReference>
<dbReference type="STRING" id="10116.ENSRNOP00000072105"/>
<dbReference type="BindingDB" id="P13444"/>
<dbReference type="ChEMBL" id="CHEMBL2195"/>
<dbReference type="iPTMnet" id="P13444"/>
<dbReference type="PhosphoSitePlus" id="P13444"/>
<dbReference type="jPOST" id="P13444"/>
<dbReference type="PaxDb" id="10116-ENSRNOP00000015190"/>
<dbReference type="GeneID" id="25331"/>
<dbReference type="KEGG" id="rno:25331"/>
<dbReference type="UCSC" id="RGD:3050">
    <property type="organism name" value="rat"/>
</dbReference>
<dbReference type="AGR" id="RGD:3050"/>
<dbReference type="CTD" id="4143"/>
<dbReference type="RGD" id="3050">
    <property type="gene designation" value="Mat1a"/>
</dbReference>
<dbReference type="eggNOG" id="KOG1506">
    <property type="taxonomic scope" value="Eukaryota"/>
</dbReference>
<dbReference type="InParanoid" id="P13444"/>
<dbReference type="OrthoDB" id="5852090at2759"/>
<dbReference type="PhylomeDB" id="P13444"/>
<dbReference type="BioCyc" id="MetaCyc:MONOMER-8568"/>
<dbReference type="BRENDA" id="2.5.1.6">
    <property type="organism ID" value="5301"/>
</dbReference>
<dbReference type="Reactome" id="R-RNO-156581">
    <property type="pathway name" value="Methylation"/>
</dbReference>
<dbReference type="Reactome" id="R-RNO-1614635">
    <property type="pathway name" value="Sulfur amino acid metabolism"/>
</dbReference>
<dbReference type="Reactome" id="R-RNO-2408508">
    <property type="pathway name" value="Metabolism of ingested SeMet, Sec, MeSec into H2Se"/>
</dbReference>
<dbReference type="UniPathway" id="UPA00315">
    <property type="reaction ID" value="UER00080"/>
</dbReference>
<dbReference type="EvolutionaryTrace" id="P13444"/>
<dbReference type="PRO" id="PR:P13444"/>
<dbReference type="Proteomes" id="UP000002494">
    <property type="component" value="Unplaced"/>
</dbReference>
<dbReference type="GO" id="GO:0005829">
    <property type="term" value="C:cytosol"/>
    <property type="evidence" value="ECO:0000318"/>
    <property type="project" value="GO_Central"/>
</dbReference>
<dbReference type="GO" id="GO:0048269">
    <property type="term" value="C:methionine adenosyltransferase complex"/>
    <property type="evidence" value="ECO:0000353"/>
    <property type="project" value="ComplexPortal"/>
</dbReference>
<dbReference type="GO" id="GO:0016363">
    <property type="term" value="C:nuclear matrix"/>
    <property type="evidence" value="ECO:0000314"/>
    <property type="project" value="RGD"/>
</dbReference>
<dbReference type="GO" id="GO:0043531">
    <property type="term" value="F:ADP binding"/>
    <property type="evidence" value="ECO:0000314"/>
    <property type="project" value="RGD"/>
</dbReference>
<dbReference type="GO" id="GO:0016597">
    <property type="term" value="F:amino acid binding"/>
    <property type="evidence" value="ECO:0000314"/>
    <property type="project" value="RGD"/>
</dbReference>
<dbReference type="GO" id="GO:0005524">
    <property type="term" value="F:ATP binding"/>
    <property type="evidence" value="ECO:0000314"/>
    <property type="project" value="RGD"/>
</dbReference>
<dbReference type="GO" id="GO:0042802">
    <property type="term" value="F:identical protein binding"/>
    <property type="evidence" value="ECO:0000353"/>
    <property type="project" value="IntAct"/>
</dbReference>
<dbReference type="GO" id="GO:0000287">
    <property type="term" value="F:magnesium ion binding"/>
    <property type="evidence" value="ECO:0000314"/>
    <property type="project" value="RGD"/>
</dbReference>
<dbReference type="GO" id="GO:0004478">
    <property type="term" value="F:methionine adenosyltransferase activity"/>
    <property type="evidence" value="ECO:0000314"/>
    <property type="project" value="RGD"/>
</dbReference>
<dbReference type="GO" id="GO:0009087">
    <property type="term" value="P:methionine catabolic process"/>
    <property type="evidence" value="ECO:0000250"/>
    <property type="project" value="UniProtKB"/>
</dbReference>
<dbReference type="GO" id="GO:0006730">
    <property type="term" value="P:one-carbon metabolic process"/>
    <property type="evidence" value="ECO:0007669"/>
    <property type="project" value="UniProtKB-KW"/>
</dbReference>
<dbReference type="GO" id="GO:0051289">
    <property type="term" value="P:protein homotetramerization"/>
    <property type="evidence" value="ECO:0000266"/>
    <property type="project" value="RGD"/>
</dbReference>
<dbReference type="GO" id="GO:0065003">
    <property type="term" value="P:protein-containing complex assembly"/>
    <property type="evidence" value="ECO:0000314"/>
    <property type="project" value="RGD"/>
</dbReference>
<dbReference type="GO" id="GO:0006556">
    <property type="term" value="P:S-adenosylmethionine biosynthetic process"/>
    <property type="evidence" value="ECO:0000314"/>
    <property type="project" value="RGD"/>
</dbReference>
<dbReference type="CDD" id="cd18079">
    <property type="entry name" value="S-AdoMet_synt"/>
    <property type="match status" value="1"/>
</dbReference>
<dbReference type="FunFam" id="3.30.300.10:FF:000001">
    <property type="entry name" value="S-adenosylmethionine synthase"/>
    <property type="match status" value="1"/>
</dbReference>
<dbReference type="FunFam" id="3.30.300.10:FF:000003">
    <property type="entry name" value="S-adenosylmethionine synthase"/>
    <property type="match status" value="1"/>
</dbReference>
<dbReference type="FunFam" id="3.30.300.10:FF:000004">
    <property type="entry name" value="S-adenosylmethionine synthase"/>
    <property type="match status" value="1"/>
</dbReference>
<dbReference type="Gene3D" id="3.30.300.10">
    <property type="match status" value="3"/>
</dbReference>
<dbReference type="HAMAP" id="MF_00086">
    <property type="entry name" value="S_AdoMet_synth1"/>
    <property type="match status" value="1"/>
</dbReference>
<dbReference type="InterPro" id="IPR022631">
    <property type="entry name" value="ADOMET_SYNTHASE_CS"/>
</dbReference>
<dbReference type="InterPro" id="IPR022630">
    <property type="entry name" value="S-AdoMet_synt_C"/>
</dbReference>
<dbReference type="InterPro" id="IPR022629">
    <property type="entry name" value="S-AdoMet_synt_central"/>
</dbReference>
<dbReference type="InterPro" id="IPR022628">
    <property type="entry name" value="S-AdoMet_synt_N"/>
</dbReference>
<dbReference type="InterPro" id="IPR002133">
    <property type="entry name" value="S-AdoMet_synthetase"/>
</dbReference>
<dbReference type="InterPro" id="IPR022636">
    <property type="entry name" value="S-AdoMet_synthetase_sfam"/>
</dbReference>
<dbReference type="NCBIfam" id="TIGR01034">
    <property type="entry name" value="metK"/>
    <property type="match status" value="1"/>
</dbReference>
<dbReference type="PANTHER" id="PTHR11964">
    <property type="entry name" value="S-ADENOSYLMETHIONINE SYNTHETASE"/>
    <property type="match status" value="1"/>
</dbReference>
<dbReference type="Pfam" id="PF02773">
    <property type="entry name" value="S-AdoMet_synt_C"/>
    <property type="match status" value="1"/>
</dbReference>
<dbReference type="Pfam" id="PF02772">
    <property type="entry name" value="S-AdoMet_synt_M"/>
    <property type="match status" value="1"/>
</dbReference>
<dbReference type="Pfam" id="PF00438">
    <property type="entry name" value="S-AdoMet_synt_N"/>
    <property type="match status" value="1"/>
</dbReference>
<dbReference type="PIRSF" id="PIRSF000497">
    <property type="entry name" value="MAT"/>
    <property type="match status" value="1"/>
</dbReference>
<dbReference type="SUPFAM" id="SSF55973">
    <property type="entry name" value="S-adenosylmethionine synthetase"/>
    <property type="match status" value="3"/>
</dbReference>
<dbReference type="PROSITE" id="PS00376">
    <property type="entry name" value="ADOMET_SYNTHASE_1"/>
    <property type="match status" value="1"/>
</dbReference>
<dbReference type="PROSITE" id="PS00377">
    <property type="entry name" value="ADOMET_SYNTHASE_2"/>
    <property type="match status" value="1"/>
</dbReference>
<keyword id="KW-0002">3D-structure</keyword>
<keyword id="KW-0067">ATP-binding</keyword>
<keyword id="KW-1015">Disulfide bond</keyword>
<keyword id="KW-0460">Magnesium</keyword>
<keyword id="KW-0479">Metal-binding</keyword>
<keyword id="KW-0547">Nucleotide-binding</keyword>
<keyword id="KW-0554">One-carbon metabolism</keyword>
<keyword id="KW-0630">Potassium</keyword>
<keyword id="KW-1185">Reference proteome</keyword>
<keyword id="KW-0702">S-nitrosylation</keyword>
<keyword id="KW-0808">Transferase</keyword>
<proteinExistence type="evidence at protein level"/>
<evidence type="ECO:0000250" key="1">
    <source>
        <dbReference type="UniProtKB" id="P0A817"/>
    </source>
</evidence>
<evidence type="ECO:0000269" key="2">
    <source>
    </source>
</evidence>
<evidence type="ECO:0000269" key="3">
    <source>
    </source>
</evidence>
<evidence type="ECO:0000269" key="4">
    <source>
    </source>
</evidence>
<evidence type="ECO:0000269" key="5">
    <source>
    </source>
</evidence>
<evidence type="ECO:0000269" key="6">
    <source>
    </source>
</evidence>
<evidence type="ECO:0000269" key="7">
    <source>
    </source>
</evidence>
<evidence type="ECO:0000269" key="8">
    <source>
    </source>
</evidence>
<evidence type="ECO:0000305" key="9"/>
<evidence type="ECO:0000305" key="10">
    <source>
    </source>
</evidence>
<evidence type="ECO:0000305" key="11">
    <source>
    </source>
</evidence>
<evidence type="ECO:0000305" key="12">
    <source>
    </source>
</evidence>
<evidence type="ECO:0007744" key="13">
    <source>
        <dbReference type="PDB" id="1O90"/>
    </source>
</evidence>
<evidence type="ECO:0007744" key="14">
    <source>
        <dbReference type="PDB" id="1O92"/>
    </source>
</evidence>
<evidence type="ECO:0007744" key="15">
    <source>
        <dbReference type="PDB" id="1O93"/>
    </source>
</evidence>
<evidence type="ECO:0007744" key="16">
    <source>
        <dbReference type="PDB" id="1O9T"/>
    </source>
</evidence>
<evidence type="ECO:0007744" key="17">
    <source>
        <dbReference type="PDB" id="1QM4"/>
    </source>
</evidence>
<evidence type="ECO:0007829" key="18">
    <source>
        <dbReference type="PDB" id="1O9T"/>
    </source>
</evidence>
<evidence type="ECO:0007829" key="19">
    <source>
        <dbReference type="PDB" id="1QM4"/>
    </source>
</evidence>
<comment type="function">
    <text evidence="4 6 8">Catalyzes the formation of S-adenosylmethionine from methionine and ATP. The reaction comprises two steps that are both catalyzed by the same enzyme: formation of S-adenosylmethionine (AdoMet) and triphosphate, and subsequent hydrolysis of the triphosphate.</text>
</comment>
<comment type="catalytic activity">
    <reaction evidence="4 6 8">
        <text>L-methionine + ATP + H2O = S-adenosyl-L-methionine + phosphate + diphosphate</text>
        <dbReference type="Rhea" id="RHEA:21080"/>
        <dbReference type="ChEBI" id="CHEBI:15377"/>
        <dbReference type="ChEBI" id="CHEBI:30616"/>
        <dbReference type="ChEBI" id="CHEBI:33019"/>
        <dbReference type="ChEBI" id="CHEBI:43474"/>
        <dbReference type="ChEBI" id="CHEBI:57844"/>
        <dbReference type="ChEBI" id="CHEBI:59789"/>
        <dbReference type="EC" id="2.5.1.6"/>
    </reaction>
</comment>
<comment type="cofactor">
    <cofactor evidence="10">
        <name>Mg(2+)</name>
        <dbReference type="ChEBI" id="CHEBI:18420"/>
    </cofactor>
    <text evidence="10">Binds 2 magnesium ions per subunit. The magnesium ions interact primarily with the substrate.</text>
</comment>
<comment type="cofactor">
    <cofactor evidence="10">
        <name>K(+)</name>
        <dbReference type="ChEBI" id="CHEBI:29103"/>
    </cofactor>
    <text evidence="10">Binds 1 potassium ion per subunit. The potassium ion interacts primarily with the substrate.</text>
</comment>
<comment type="pathway">
    <text evidence="4 6 8">Amino-acid biosynthesis; S-adenosyl-L-methionine biosynthesis; S-adenosyl-L-methionine from L-methionine: step 1/1.</text>
</comment>
<comment type="subunit">
    <text evidence="4 5 6 12">Homotetramer (MAT-I); dimer of dimers (PubMed:10873471, PubMed:12888348, PubMed:1517209, PubMed:9755242). Homodimer (MAT-III) (PubMed:1517209, PubMed:9755242).</text>
</comment>
<comment type="interaction">
    <interactant intactId="EBI-961260">
        <id>P13444</id>
    </interactant>
    <interactant intactId="EBI-961260">
        <id>P13444</id>
        <label>Mat1a</label>
    </interactant>
    <organismsDiffer>false</organismsDiffer>
    <experiments>2</experiments>
</comment>
<comment type="tissue specificity">
    <text evidence="6 7">Detected in liver (at protein level) (PubMed:1517209). Expressed in liver (PubMed:2806235).</text>
</comment>
<comment type="PTM">
    <text evidence="2 8">S-nitrosylation of Cys-121 inactivates the enzyme.</text>
</comment>
<comment type="PTM">
    <text evidence="3 4">An intrachain disulfide bond can be formed (PubMed:10601859). The protein structure shows that the relevant Cys residues are in a position that would permit formation of a disulfide bond (PubMed:10873471).</text>
</comment>
<comment type="similarity">
    <text evidence="9">Belongs to the AdoMet synthase family.</text>
</comment>
<organism>
    <name type="scientific">Rattus norvegicus</name>
    <name type="common">Rat</name>
    <dbReference type="NCBI Taxonomy" id="10116"/>
    <lineage>
        <taxon>Eukaryota</taxon>
        <taxon>Metazoa</taxon>
        <taxon>Chordata</taxon>
        <taxon>Craniata</taxon>
        <taxon>Vertebrata</taxon>
        <taxon>Euteleostomi</taxon>
        <taxon>Mammalia</taxon>
        <taxon>Eutheria</taxon>
        <taxon>Euarchontoglires</taxon>
        <taxon>Glires</taxon>
        <taxon>Rodentia</taxon>
        <taxon>Myomorpha</taxon>
        <taxon>Muroidea</taxon>
        <taxon>Muridae</taxon>
        <taxon>Murinae</taxon>
        <taxon>Rattus</taxon>
    </lineage>
</organism>
<feature type="chain" id="PRO_0000174434" description="S-adenosylmethionine synthase isoform type-1">
    <location>
        <begin position="1"/>
        <end position="397"/>
    </location>
</feature>
<feature type="region of interest" description="Flexible loop" evidence="1">
    <location>
        <begin position="114"/>
        <end position="126"/>
    </location>
</feature>
<feature type="binding site" evidence="14 16">
    <location>
        <position position="24"/>
    </location>
    <ligand>
        <name>Mg(2+)</name>
        <dbReference type="ChEBI" id="CHEBI:18420"/>
    </ligand>
</feature>
<feature type="binding site" description="in other chain" evidence="5 14 15 16">
    <location>
        <position position="30"/>
    </location>
    <ligand>
        <name>ATP</name>
        <dbReference type="ChEBI" id="CHEBI:30616"/>
        <note>ligand shared between two neighboring subunits</note>
    </ligand>
</feature>
<feature type="binding site" evidence="1">
    <location>
        <position position="58"/>
    </location>
    <ligand>
        <name>K(+)</name>
        <dbReference type="ChEBI" id="CHEBI:29103"/>
    </ligand>
</feature>
<feature type="binding site" description="in other chain" evidence="1">
    <location>
        <position position="71"/>
    </location>
    <ligand>
        <name>L-methionine</name>
        <dbReference type="ChEBI" id="CHEBI:57844"/>
        <note>ligand shared between two neighboring subunits</note>
    </ligand>
</feature>
<feature type="binding site" description="in other chain" evidence="1">
    <location>
        <position position="114"/>
    </location>
    <ligand>
        <name>L-methionine</name>
        <dbReference type="ChEBI" id="CHEBI:57844"/>
        <note>ligand shared between two neighboring subunits</note>
    </ligand>
</feature>
<feature type="binding site" description="in other chain" evidence="5 14 16">
    <location>
        <begin position="180"/>
        <end position="182"/>
    </location>
    <ligand>
        <name>ATP</name>
        <dbReference type="ChEBI" id="CHEBI:30616"/>
        <note>ligand shared between two neighboring subunits</note>
    </ligand>
</feature>
<feature type="binding site" description="in other chain" evidence="10 11 17">
    <location>
        <begin position="248"/>
        <end position="251"/>
    </location>
    <ligand>
        <name>ATP</name>
        <dbReference type="ChEBI" id="CHEBI:30616"/>
        <note>ligand shared between two neighboring subunits</note>
    </ligand>
</feature>
<feature type="binding site" description="in other chain" evidence="14">
    <location>
        <position position="259"/>
    </location>
    <ligand>
        <name>ATP</name>
        <dbReference type="ChEBI" id="CHEBI:30616"/>
        <note>ligand shared between two neighboring subunits</note>
    </ligand>
</feature>
<feature type="binding site" evidence="1">
    <location>
        <position position="259"/>
    </location>
    <ligand>
        <name>L-methionine</name>
        <dbReference type="ChEBI" id="CHEBI:57844"/>
        <note>ligand shared between two neighboring subunits</note>
    </ligand>
</feature>
<feature type="binding site" description="in other chain" evidence="5 16">
    <location>
        <begin position="265"/>
        <end position="266"/>
    </location>
    <ligand>
        <name>ATP</name>
        <dbReference type="ChEBI" id="CHEBI:30616"/>
        <note>ligand shared between two neighboring subunits</note>
    </ligand>
</feature>
<feature type="binding site" evidence="14">
    <location>
        <position position="282"/>
    </location>
    <ligand>
        <name>ATP</name>
        <dbReference type="ChEBI" id="CHEBI:30616"/>
        <note>ligand shared between two neighboring subunits</note>
    </ligand>
</feature>
<feature type="binding site" evidence="5 14 16">
    <location>
        <position position="286"/>
    </location>
    <ligand>
        <name>ATP</name>
        <dbReference type="ChEBI" id="CHEBI:30616"/>
        <note>ligand shared between two neighboring subunits</note>
    </ligand>
</feature>
<feature type="binding site" evidence="5 14 16">
    <location>
        <position position="290"/>
    </location>
    <ligand>
        <name>ATP</name>
        <dbReference type="ChEBI" id="CHEBI:30616"/>
        <note>ligand shared between two neighboring subunits</note>
    </ligand>
</feature>
<feature type="binding site" description="in other chain" evidence="1">
    <location>
        <position position="290"/>
    </location>
    <ligand>
        <name>L-methionine</name>
        <dbReference type="ChEBI" id="CHEBI:57844"/>
        <note>ligand shared between two neighboring subunits</note>
    </ligand>
</feature>
<feature type="modified residue" description="S-nitrosocysteine" evidence="2">
    <location>
        <position position="121"/>
    </location>
</feature>
<feature type="disulfide bond" evidence="3 10">
    <location>
        <begin position="35"/>
        <end position="61"/>
    </location>
</feature>
<feature type="mutagenesis site" description="Loss of S-adenosylmethionine synthase activity, but does not abolish polyphosphatase activity." evidence="4">
    <original>D</original>
    <variation>G</variation>
    <location>
        <position position="180"/>
    </location>
</feature>
<feature type="mutagenesis site" description="Loss of S-adenosylmethionine synthase activity, but does not abolish polyphosphatase activity." evidence="4">
    <original>K</original>
    <variation>G</variation>
    <location>
        <position position="182"/>
    </location>
</feature>
<feature type="mutagenesis site" description="Loss of S-adenosylmethionine synthase activity, but does not abolish polyphosphatase activity." evidence="4">
    <original>F</original>
    <variation>D</variation>
    <variation>G</variation>
    <location>
        <position position="251"/>
    </location>
</feature>
<feature type="sequence conflict" description="In Ref. 3; AAH89770." evidence="9" ref="3">
    <location>
        <position position="345"/>
    </location>
</feature>
<feature type="strand" evidence="19">
    <location>
        <begin position="19"/>
        <end position="26"/>
    </location>
</feature>
<feature type="helix" evidence="19">
    <location>
        <begin position="31"/>
        <end position="47"/>
    </location>
</feature>
<feature type="strand" evidence="19">
    <location>
        <begin position="54"/>
        <end position="61"/>
    </location>
</feature>
<feature type="strand" evidence="19">
    <location>
        <begin position="63"/>
        <end position="73"/>
    </location>
</feature>
<feature type="helix" evidence="19">
    <location>
        <begin position="80"/>
        <end position="91"/>
    </location>
</feature>
<feature type="turn" evidence="19">
    <location>
        <begin position="96"/>
        <end position="99"/>
    </location>
</feature>
<feature type="turn" evidence="19">
    <location>
        <begin position="102"/>
        <end position="104"/>
    </location>
</feature>
<feature type="strand" evidence="19">
    <location>
        <begin position="105"/>
        <end position="109"/>
    </location>
</feature>
<feature type="strand" evidence="19">
    <location>
        <begin position="112"/>
        <end position="114"/>
    </location>
</feature>
<feature type="strand" evidence="19">
    <location>
        <begin position="137"/>
        <end position="144"/>
    </location>
</feature>
<feature type="helix" evidence="19">
    <location>
        <begin position="153"/>
        <end position="171"/>
    </location>
</feature>
<feature type="strand" evidence="19">
    <location>
        <begin position="172"/>
        <end position="174"/>
    </location>
</feature>
<feature type="strand" evidence="19">
    <location>
        <begin position="177"/>
        <end position="190"/>
    </location>
</feature>
<feature type="strand" evidence="19">
    <location>
        <begin position="197"/>
        <end position="210"/>
    </location>
</feature>
<feature type="strand" evidence="19">
    <location>
        <begin position="212"/>
        <end position="214"/>
    </location>
</feature>
<feature type="helix" evidence="19">
    <location>
        <begin position="216"/>
        <end position="225"/>
    </location>
</feature>
<feature type="turn" evidence="19">
    <location>
        <begin position="226"/>
        <end position="231"/>
    </location>
</feature>
<feature type="turn" evidence="19">
    <location>
        <begin position="234"/>
        <end position="236"/>
    </location>
</feature>
<feature type="strand" evidence="19">
    <location>
        <begin position="242"/>
        <end position="246"/>
    </location>
</feature>
<feature type="turn" evidence="19">
    <location>
        <begin position="256"/>
        <end position="259"/>
    </location>
</feature>
<feature type="turn" evidence="19">
    <location>
        <begin position="267"/>
        <end position="274"/>
    </location>
</feature>
<feature type="helix" evidence="19">
    <location>
        <begin position="291"/>
        <end position="308"/>
    </location>
</feature>
<feature type="strand" evidence="19">
    <location>
        <begin position="313"/>
        <end position="321"/>
    </location>
</feature>
<feature type="strand" evidence="19">
    <location>
        <begin position="331"/>
        <end position="335"/>
    </location>
</feature>
<feature type="helix" evidence="19">
    <location>
        <begin position="347"/>
        <end position="354"/>
    </location>
</feature>
<feature type="helix" evidence="19">
    <location>
        <begin position="359"/>
        <end position="365"/>
    </location>
</feature>
<feature type="turn" evidence="19">
    <location>
        <begin position="366"/>
        <end position="369"/>
    </location>
</feature>
<feature type="helix" evidence="19">
    <location>
        <begin position="373"/>
        <end position="376"/>
    </location>
</feature>
<feature type="strand" evidence="18">
    <location>
        <begin position="377"/>
        <end position="379"/>
    </location>
</feature>
<feature type="strand" evidence="19">
    <location>
        <begin position="381"/>
        <end position="383"/>
    </location>
</feature>
<feature type="helix" evidence="19">
    <location>
        <begin position="388"/>
        <end position="390"/>
    </location>
</feature>
<reference key="1">
    <citation type="journal article" date="1989" name="Eur. J. Biochem.">
        <title>Isolation of a cDNA encoding the rat liver S-adenosylmethionine synthetase.</title>
        <authorList>
            <person name="Horikawa S."/>
            <person name="Ishikawa M."/>
            <person name="Ozasa H."/>
            <person name="Tsukada K."/>
        </authorList>
    </citation>
    <scope>NUCLEOTIDE SEQUENCE [MRNA]</scope>
    <scope>TISSUE SPECIFICITY</scope>
    <source>
        <strain>Wistar</strain>
        <tissue>Liver</tissue>
    </source>
</reference>
<reference key="2">
    <citation type="journal article" date="1991" name="FEBS Lett.">
        <title>Analysis of the 5' non-coding region of rat liver S-adenosylmethionine synthetase mRNA and comparison of the Mr deduced from the cDNA sequence and the purified enzyme.</title>
        <authorList>
            <person name="Alvarez L."/>
            <person name="Asuncion M."/>
            <person name="Corrales F."/>
            <person name="Pajares M.A."/>
            <person name="Mato J.M."/>
        </authorList>
    </citation>
    <scope>NUCLEOTIDE SEQUENCE [MRNA]</scope>
</reference>
<reference key="3">
    <citation type="journal article" date="2004" name="Genome Res.">
        <title>The status, quality, and expansion of the NIH full-length cDNA project: the Mammalian Gene Collection (MGC).</title>
        <authorList>
            <consortium name="The MGC Project Team"/>
        </authorList>
    </citation>
    <scope>NUCLEOTIDE SEQUENCE [LARGE SCALE MRNA]</scope>
    <source>
        <tissue>Spleen</tissue>
    </source>
</reference>
<reference key="4">
    <citation type="journal article" date="1992" name="J. Biol. Chem.">
        <title>Modulation of rat liver S-adenosylmethionine synthetase activity by glutathione.</title>
        <authorList>
            <person name="Pajares M.A."/>
            <person name="Duran C."/>
            <person name="Corrales F."/>
            <person name="Pliego M.M."/>
            <person name="Mato J.M."/>
        </authorList>
    </citation>
    <scope>SUBUNIT</scope>
    <scope>CATALYTIC ACTIVITY</scope>
    <scope>FUNCTION</scope>
    <scope>PATHWAY</scope>
    <scope>TISSUE SPECIFICITY</scope>
</reference>
<reference key="5">
    <citation type="journal article" date="1998" name="Hepatology">
        <title>Nitric oxide inactivates rat hepatic methionine adenosyltransferase In vivo by S-nitrosylation.</title>
        <authorList>
            <person name="Ruiz F."/>
            <person name="Corrales F.J."/>
            <person name="Miqueo C."/>
            <person name="Mato J.M."/>
        </authorList>
    </citation>
    <scope>S-NITROSYLATION</scope>
    <scope>CATALYTIC ACTIVITY</scope>
    <scope>FUNCTION</scope>
    <scope>SUBUNIT</scope>
    <scope>PATHWAY</scope>
</reference>
<reference key="6">
    <citation type="journal article" date="1999" name="J. Biol. Chem.">
        <title>Methionine adenosyltransferase S-nitrosylation is regulated by the basic and acidic amino acids surrounding the target thiol.</title>
        <authorList>
            <person name="Perez-Mato I."/>
            <person name="Castro C."/>
            <person name="Ruiz F.A."/>
            <person name="Corrales F.J."/>
            <person name="Mato J.M."/>
        </authorList>
    </citation>
    <scope>S-NITROSYLATION AT CYS-121</scope>
</reference>
<reference key="7">
    <citation type="journal article" date="2000" name="Eur. J. Biochem.">
        <title>Assignment of a single disulfide bridge in rat liver methionine adenosyltransferase.</title>
        <authorList>
            <person name="Martinez-Chantar M.L."/>
            <person name="Pajares M.A."/>
        </authorList>
    </citation>
    <scope>DISULFIDE BOND</scope>
</reference>
<reference evidence="17" key="8">
    <citation type="journal article" date="2000" name="J. Mol. Biol.">
        <title>The crystal structure of tetrameric methionine adenosyltransferase from rat liver reveals the methionine-binding site.</title>
        <authorList>
            <person name="Gonzalez B."/>
            <person name="Pajares M.A."/>
            <person name="Hermoso J.A."/>
            <person name="Alvarez L."/>
            <person name="Garrido F."/>
            <person name="Sufrin J.R."/>
            <person name="Sanz-Aparicio J."/>
        </authorList>
    </citation>
    <scope>X-RAY CRYSTALLOGRAPHY (2.66 ANGSTROMS) IN COMPLEX WITH METHIONINE ANALOG; POTASSIUM AND MAGNESIUM</scope>
    <scope>FUNCTION</scope>
    <scope>CATALYTIC ACTIVITY</scope>
    <scope>PATHWAY</scope>
    <scope>SUBUNIT</scope>
    <scope>MUTAGENESIS OF ASP-180; LYS-182 AND PHE-251</scope>
    <scope>DISULFIDE BOND</scope>
</reference>
<reference evidence="13 14 15 16" key="9">
    <citation type="journal article" date="2003" name="J. Mol. Biol.">
        <title>Crystal structures of methionine adenosyltransferase complexed with substrates and products reveal the methionine-ATP recognition and give insights into the catalytic mechanism.</title>
        <authorList>
            <person name="Gonzalez B."/>
            <person name="Pajares M.A."/>
            <person name="Hermoso J.A."/>
            <person name="Guillerm D."/>
            <person name="Guillerm G."/>
            <person name="Sanz-Aparicio J."/>
        </authorList>
    </citation>
    <scope>X-RAY CRYSTALLOGRAPHY (2.90 ANGSTROMS) IN COMPLEXES WITH ATP; METHIONINE POTASSIUM AND MAGNESIUM</scope>
    <scope>SUBUNIT</scope>
</reference>
<name>METK1_RAT</name>
<accession>P13444</accession>
<accession>Q5FVU2</accession>
<gene>
    <name type="primary">Mat1a</name>
    <name type="synonym">Ams1</name>
</gene>
<protein>
    <recommendedName>
        <fullName>S-adenosylmethionine synthase isoform type-1</fullName>
        <shortName>AdoMet synthase 1</shortName>
        <ecNumber evidence="4 6 8">2.5.1.6</ecNumber>
    </recommendedName>
    <alternativeName>
        <fullName>Methionine adenosyltransferase 1</fullName>
        <shortName>MAT 1</shortName>
    </alternativeName>
    <alternativeName>
        <fullName>Methionine adenosyltransferase I/III</fullName>
        <shortName>MAT-I/III</shortName>
    </alternativeName>
</protein>